<gene>
    <name evidence="1" type="primary">leuD</name>
    <name type="ordered locus">EC55989_0069</name>
</gene>
<proteinExistence type="inferred from homology"/>
<keyword id="KW-0028">Amino-acid biosynthesis</keyword>
<keyword id="KW-0100">Branched-chain amino acid biosynthesis</keyword>
<keyword id="KW-0432">Leucine biosynthesis</keyword>
<keyword id="KW-0456">Lyase</keyword>
<keyword id="KW-1185">Reference proteome</keyword>
<protein>
    <recommendedName>
        <fullName evidence="1">3-isopropylmalate dehydratase small subunit</fullName>
        <ecNumber evidence="1">4.2.1.33</ecNumber>
    </recommendedName>
    <alternativeName>
        <fullName evidence="1">Alpha-IPM isomerase</fullName>
        <shortName evidence="1">IPMI</shortName>
    </alternativeName>
    <alternativeName>
        <fullName evidence="1">Isopropylmalate isomerase</fullName>
    </alternativeName>
</protein>
<reference key="1">
    <citation type="journal article" date="2009" name="PLoS Genet.">
        <title>Organised genome dynamics in the Escherichia coli species results in highly diverse adaptive paths.</title>
        <authorList>
            <person name="Touchon M."/>
            <person name="Hoede C."/>
            <person name="Tenaillon O."/>
            <person name="Barbe V."/>
            <person name="Baeriswyl S."/>
            <person name="Bidet P."/>
            <person name="Bingen E."/>
            <person name="Bonacorsi S."/>
            <person name="Bouchier C."/>
            <person name="Bouvet O."/>
            <person name="Calteau A."/>
            <person name="Chiapello H."/>
            <person name="Clermont O."/>
            <person name="Cruveiller S."/>
            <person name="Danchin A."/>
            <person name="Diard M."/>
            <person name="Dossat C."/>
            <person name="Karoui M.E."/>
            <person name="Frapy E."/>
            <person name="Garry L."/>
            <person name="Ghigo J.M."/>
            <person name="Gilles A.M."/>
            <person name="Johnson J."/>
            <person name="Le Bouguenec C."/>
            <person name="Lescat M."/>
            <person name="Mangenot S."/>
            <person name="Martinez-Jehanne V."/>
            <person name="Matic I."/>
            <person name="Nassif X."/>
            <person name="Oztas S."/>
            <person name="Petit M.A."/>
            <person name="Pichon C."/>
            <person name="Rouy Z."/>
            <person name="Ruf C.S."/>
            <person name="Schneider D."/>
            <person name="Tourret J."/>
            <person name="Vacherie B."/>
            <person name="Vallenet D."/>
            <person name="Medigue C."/>
            <person name="Rocha E.P.C."/>
            <person name="Denamur E."/>
        </authorList>
    </citation>
    <scope>NUCLEOTIDE SEQUENCE [LARGE SCALE GENOMIC DNA]</scope>
    <source>
        <strain>55989 / EAEC</strain>
    </source>
</reference>
<evidence type="ECO:0000255" key="1">
    <source>
        <dbReference type="HAMAP-Rule" id="MF_01031"/>
    </source>
</evidence>
<organism>
    <name type="scientific">Escherichia coli (strain 55989 / EAEC)</name>
    <dbReference type="NCBI Taxonomy" id="585055"/>
    <lineage>
        <taxon>Bacteria</taxon>
        <taxon>Pseudomonadati</taxon>
        <taxon>Pseudomonadota</taxon>
        <taxon>Gammaproteobacteria</taxon>
        <taxon>Enterobacterales</taxon>
        <taxon>Enterobacteriaceae</taxon>
        <taxon>Escherichia</taxon>
    </lineage>
</organism>
<dbReference type="EC" id="4.2.1.33" evidence="1"/>
<dbReference type="EMBL" id="CU928145">
    <property type="protein sequence ID" value="CAU95956.1"/>
    <property type="molecule type" value="Genomic_DNA"/>
</dbReference>
<dbReference type="RefSeq" id="WP_000818228.1">
    <property type="nucleotide sequence ID" value="NC_011748.1"/>
</dbReference>
<dbReference type="SMR" id="B7L4J2"/>
<dbReference type="GeneID" id="93777364"/>
<dbReference type="KEGG" id="eck:EC55989_0069"/>
<dbReference type="HOGENOM" id="CLU_081378_0_3_6"/>
<dbReference type="UniPathway" id="UPA00048">
    <property type="reaction ID" value="UER00071"/>
</dbReference>
<dbReference type="Proteomes" id="UP000000746">
    <property type="component" value="Chromosome"/>
</dbReference>
<dbReference type="GO" id="GO:0009316">
    <property type="term" value="C:3-isopropylmalate dehydratase complex"/>
    <property type="evidence" value="ECO:0007669"/>
    <property type="project" value="InterPro"/>
</dbReference>
<dbReference type="GO" id="GO:0003861">
    <property type="term" value="F:3-isopropylmalate dehydratase activity"/>
    <property type="evidence" value="ECO:0007669"/>
    <property type="project" value="UniProtKB-UniRule"/>
</dbReference>
<dbReference type="GO" id="GO:0009098">
    <property type="term" value="P:L-leucine biosynthetic process"/>
    <property type="evidence" value="ECO:0007669"/>
    <property type="project" value="UniProtKB-UniRule"/>
</dbReference>
<dbReference type="CDD" id="cd01577">
    <property type="entry name" value="IPMI_Swivel"/>
    <property type="match status" value="1"/>
</dbReference>
<dbReference type="FunFam" id="3.20.19.10:FF:000003">
    <property type="entry name" value="3-isopropylmalate dehydratase small subunit"/>
    <property type="match status" value="1"/>
</dbReference>
<dbReference type="Gene3D" id="3.20.19.10">
    <property type="entry name" value="Aconitase, domain 4"/>
    <property type="match status" value="1"/>
</dbReference>
<dbReference type="HAMAP" id="MF_01031">
    <property type="entry name" value="LeuD_type1"/>
    <property type="match status" value="1"/>
</dbReference>
<dbReference type="InterPro" id="IPR004431">
    <property type="entry name" value="3-IsopropMal_deHydase_ssu"/>
</dbReference>
<dbReference type="InterPro" id="IPR015928">
    <property type="entry name" value="Aconitase/3IPM_dehydase_swvl"/>
</dbReference>
<dbReference type="InterPro" id="IPR000573">
    <property type="entry name" value="AconitaseA/IPMdHydase_ssu_swvl"/>
</dbReference>
<dbReference type="InterPro" id="IPR033940">
    <property type="entry name" value="IPMI_Swivel"/>
</dbReference>
<dbReference type="InterPro" id="IPR050075">
    <property type="entry name" value="LeuD"/>
</dbReference>
<dbReference type="NCBIfam" id="TIGR00171">
    <property type="entry name" value="leuD"/>
    <property type="match status" value="1"/>
</dbReference>
<dbReference type="NCBIfam" id="NF002458">
    <property type="entry name" value="PRK01641.1"/>
    <property type="match status" value="1"/>
</dbReference>
<dbReference type="PANTHER" id="PTHR43345:SF5">
    <property type="entry name" value="3-ISOPROPYLMALATE DEHYDRATASE SMALL SUBUNIT"/>
    <property type="match status" value="1"/>
</dbReference>
<dbReference type="PANTHER" id="PTHR43345">
    <property type="entry name" value="3-ISOPROPYLMALATE DEHYDRATASE SMALL SUBUNIT 2-RELATED-RELATED"/>
    <property type="match status" value="1"/>
</dbReference>
<dbReference type="Pfam" id="PF00694">
    <property type="entry name" value="Aconitase_C"/>
    <property type="match status" value="1"/>
</dbReference>
<dbReference type="SUPFAM" id="SSF52016">
    <property type="entry name" value="LeuD/IlvD-like"/>
    <property type="match status" value="1"/>
</dbReference>
<sequence length="201" mass="22487">MAEKFIKHTGLVVPLDAANVDTDAIIPKQFLQKVTRTGFGAHLFNDWRFLDEKGQQPNPDFVLNFPQYQGASILLARENFGCGSSREHAPWALTDYGFKVVIAPSFADIFYGNSFNNQLLPVKLSDAEVDELFALVKANPGIHFDVDLEAQEVKAGEKTYRFTIDAFRRHCMMNGLDSIGLTLQHDDAIAAYEAKQPAFMN</sequence>
<comment type="function">
    <text evidence="1">Catalyzes the isomerization between 2-isopropylmalate and 3-isopropylmalate, via the formation of 2-isopropylmaleate.</text>
</comment>
<comment type="catalytic activity">
    <reaction evidence="1">
        <text>(2R,3S)-3-isopropylmalate = (2S)-2-isopropylmalate</text>
        <dbReference type="Rhea" id="RHEA:32287"/>
        <dbReference type="ChEBI" id="CHEBI:1178"/>
        <dbReference type="ChEBI" id="CHEBI:35121"/>
        <dbReference type="EC" id="4.2.1.33"/>
    </reaction>
</comment>
<comment type="pathway">
    <text evidence="1">Amino-acid biosynthesis; L-leucine biosynthesis; L-leucine from 3-methyl-2-oxobutanoate: step 2/4.</text>
</comment>
<comment type="subunit">
    <text evidence="1">Heterodimer of LeuC and LeuD.</text>
</comment>
<comment type="similarity">
    <text evidence="1">Belongs to the LeuD family. LeuD type 1 subfamily.</text>
</comment>
<accession>B7L4J2</accession>
<feature type="chain" id="PRO_1000149413" description="3-isopropylmalate dehydratase small subunit">
    <location>
        <begin position="1"/>
        <end position="201"/>
    </location>
</feature>
<name>LEUD_ECO55</name>